<name>NADD_PSEF5</name>
<evidence type="ECO:0000255" key="1">
    <source>
        <dbReference type="HAMAP-Rule" id="MF_00244"/>
    </source>
</evidence>
<comment type="function">
    <text evidence="1">Catalyzes the reversible adenylation of nicotinate mononucleotide (NaMN) to nicotinic acid adenine dinucleotide (NaAD).</text>
</comment>
<comment type="catalytic activity">
    <reaction evidence="1">
        <text>nicotinate beta-D-ribonucleotide + ATP + H(+) = deamido-NAD(+) + diphosphate</text>
        <dbReference type="Rhea" id="RHEA:22860"/>
        <dbReference type="ChEBI" id="CHEBI:15378"/>
        <dbReference type="ChEBI" id="CHEBI:30616"/>
        <dbReference type="ChEBI" id="CHEBI:33019"/>
        <dbReference type="ChEBI" id="CHEBI:57502"/>
        <dbReference type="ChEBI" id="CHEBI:58437"/>
        <dbReference type="EC" id="2.7.7.18"/>
    </reaction>
</comment>
<comment type="pathway">
    <text evidence="1">Cofactor biosynthesis; NAD(+) biosynthesis; deamido-NAD(+) from nicotinate D-ribonucleotide: step 1/1.</text>
</comment>
<comment type="similarity">
    <text evidence="1">Belongs to the NadD family.</text>
</comment>
<keyword id="KW-0067">ATP-binding</keyword>
<keyword id="KW-0520">NAD</keyword>
<keyword id="KW-0547">Nucleotide-binding</keyword>
<keyword id="KW-0548">Nucleotidyltransferase</keyword>
<keyword id="KW-0662">Pyridine nucleotide biosynthesis</keyword>
<keyword id="KW-0808">Transferase</keyword>
<dbReference type="EC" id="2.7.7.18" evidence="1"/>
<dbReference type="EMBL" id="CP000076">
    <property type="protein sequence ID" value="AAY94665.1"/>
    <property type="molecule type" value="Genomic_DNA"/>
</dbReference>
<dbReference type="RefSeq" id="WP_011063673.1">
    <property type="nucleotide sequence ID" value="NC_004129.6"/>
</dbReference>
<dbReference type="SMR" id="Q4K5G0"/>
<dbReference type="STRING" id="220664.PFL_5455"/>
<dbReference type="GeneID" id="57478419"/>
<dbReference type="KEGG" id="pfl:PFL_5455"/>
<dbReference type="PATRIC" id="fig|220664.5.peg.5569"/>
<dbReference type="eggNOG" id="COG1057">
    <property type="taxonomic scope" value="Bacteria"/>
</dbReference>
<dbReference type="HOGENOM" id="CLU_069765_0_0_6"/>
<dbReference type="UniPathway" id="UPA00253">
    <property type="reaction ID" value="UER00332"/>
</dbReference>
<dbReference type="Proteomes" id="UP000008540">
    <property type="component" value="Chromosome"/>
</dbReference>
<dbReference type="GO" id="GO:0005524">
    <property type="term" value="F:ATP binding"/>
    <property type="evidence" value="ECO:0007669"/>
    <property type="project" value="UniProtKB-KW"/>
</dbReference>
<dbReference type="GO" id="GO:0004515">
    <property type="term" value="F:nicotinate-nucleotide adenylyltransferase activity"/>
    <property type="evidence" value="ECO:0007669"/>
    <property type="project" value="UniProtKB-UniRule"/>
</dbReference>
<dbReference type="GO" id="GO:0009435">
    <property type="term" value="P:NAD biosynthetic process"/>
    <property type="evidence" value="ECO:0007669"/>
    <property type="project" value="UniProtKB-UniRule"/>
</dbReference>
<dbReference type="CDD" id="cd02165">
    <property type="entry name" value="NMNAT"/>
    <property type="match status" value="1"/>
</dbReference>
<dbReference type="Gene3D" id="3.40.50.620">
    <property type="entry name" value="HUPs"/>
    <property type="match status" value="1"/>
</dbReference>
<dbReference type="HAMAP" id="MF_00244">
    <property type="entry name" value="NaMN_adenylyltr"/>
    <property type="match status" value="1"/>
</dbReference>
<dbReference type="InterPro" id="IPR004821">
    <property type="entry name" value="Cyt_trans-like"/>
</dbReference>
<dbReference type="InterPro" id="IPR005248">
    <property type="entry name" value="NadD/NMNAT"/>
</dbReference>
<dbReference type="InterPro" id="IPR014729">
    <property type="entry name" value="Rossmann-like_a/b/a_fold"/>
</dbReference>
<dbReference type="NCBIfam" id="TIGR00125">
    <property type="entry name" value="cyt_tran_rel"/>
    <property type="match status" value="1"/>
</dbReference>
<dbReference type="NCBIfam" id="TIGR00482">
    <property type="entry name" value="nicotinate (nicotinamide) nucleotide adenylyltransferase"/>
    <property type="match status" value="1"/>
</dbReference>
<dbReference type="NCBIfam" id="NF000839">
    <property type="entry name" value="PRK00071.1-1"/>
    <property type="match status" value="1"/>
</dbReference>
<dbReference type="NCBIfam" id="NF000840">
    <property type="entry name" value="PRK00071.1-3"/>
    <property type="match status" value="1"/>
</dbReference>
<dbReference type="PANTHER" id="PTHR39321">
    <property type="entry name" value="NICOTINATE-NUCLEOTIDE ADENYLYLTRANSFERASE-RELATED"/>
    <property type="match status" value="1"/>
</dbReference>
<dbReference type="PANTHER" id="PTHR39321:SF3">
    <property type="entry name" value="PHOSPHOPANTETHEINE ADENYLYLTRANSFERASE"/>
    <property type="match status" value="1"/>
</dbReference>
<dbReference type="Pfam" id="PF01467">
    <property type="entry name" value="CTP_transf_like"/>
    <property type="match status" value="1"/>
</dbReference>
<dbReference type="SUPFAM" id="SSF52374">
    <property type="entry name" value="Nucleotidylyl transferase"/>
    <property type="match status" value="1"/>
</dbReference>
<protein>
    <recommendedName>
        <fullName evidence="1">Probable nicotinate-nucleotide adenylyltransferase</fullName>
        <ecNumber evidence="1">2.7.7.18</ecNumber>
    </recommendedName>
    <alternativeName>
        <fullName evidence="1">Deamido-NAD(+) diphosphorylase</fullName>
    </alternativeName>
    <alternativeName>
        <fullName evidence="1">Deamido-NAD(+) pyrophosphorylase</fullName>
    </alternativeName>
    <alternativeName>
        <fullName evidence="1">Nicotinate mononucleotide adenylyltransferase</fullName>
        <shortName evidence="1">NaMN adenylyltransferase</shortName>
    </alternativeName>
</protein>
<gene>
    <name evidence="1" type="primary">nadD</name>
    <name type="ordered locus">PFL_5455</name>
</gene>
<organism>
    <name type="scientific">Pseudomonas fluorescens (strain ATCC BAA-477 / NRRL B-23932 / Pf-5)</name>
    <dbReference type="NCBI Taxonomy" id="220664"/>
    <lineage>
        <taxon>Bacteria</taxon>
        <taxon>Pseudomonadati</taxon>
        <taxon>Pseudomonadota</taxon>
        <taxon>Gammaproteobacteria</taxon>
        <taxon>Pseudomonadales</taxon>
        <taxon>Pseudomonadaceae</taxon>
        <taxon>Pseudomonas</taxon>
    </lineage>
</organism>
<sequence length="214" mass="23525">MGKRIGLLGGTFDPVHIGHLRGALEVAESMQLDELRLVPSARPPHRDTPQVSALDRLAMVECAVAGVSPLVVDDRELKRDKPSYTIDTLEQMRAELAADDQLFLLLGWDAFCGLPTWHRWEELLQHCHILVLQRPDADSEPPDALRNLLAARSVSDPLALQGPGGHIAFVWQTPLAVSATQIRQLLASGKSVRFLVPDAVLAYIDAHGLYRAPN</sequence>
<feature type="chain" id="PRO_0000310131" description="Probable nicotinate-nucleotide adenylyltransferase">
    <location>
        <begin position="1"/>
        <end position="214"/>
    </location>
</feature>
<accession>Q4K5G0</accession>
<proteinExistence type="inferred from homology"/>
<reference key="1">
    <citation type="journal article" date="2005" name="Nat. Biotechnol.">
        <title>Complete genome sequence of the plant commensal Pseudomonas fluorescens Pf-5.</title>
        <authorList>
            <person name="Paulsen I.T."/>
            <person name="Press C.M."/>
            <person name="Ravel J."/>
            <person name="Kobayashi D.Y."/>
            <person name="Myers G.S.A."/>
            <person name="Mavrodi D.V."/>
            <person name="DeBoy R.T."/>
            <person name="Seshadri R."/>
            <person name="Ren Q."/>
            <person name="Madupu R."/>
            <person name="Dodson R.J."/>
            <person name="Durkin A.S."/>
            <person name="Brinkac L.M."/>
            <person name="Daugherty S.C."/>
            <person name="Sullivan S.A."/>
            <person name="Rosovitz M.J."/>
            <person name="Gwinn M.L."/>
            <person name="Zhou L."/>
            <person name="Schneider D.J."/>
            <person name="Cartinhour S.W."/>
            <person name="Nelson W.C."/>
            <person name="Weidman J."/>
            <person name="Watkins K."/>
            <person name="Tran K."/>
            <person name="Khouri H."/>
            <person name="Pierson E.A."/>
            <person name="Pierson L.S. III"/>
            <person name="Thomashow L.S."/>
            <person name="Loper J.E."/>
        </authorList>
    </citation>
    <scope>NUCLEOTIDE SEQUENCE [LARGE SCALE GENOMIC DNA]</scope>
    <source>
        <strain>ATCC BAA-477 / NRRL B-23932 / Pf-5</strain>
    </source>
</reference>